<keyword id="KW-0997">Cell inner membrane</keyword>
<keyword id="KW-1003">Cell membrane</keyword>
<keyword id="KW-0406">Ion transport</keyword>
<keyword id="KW-0472">Membrane</keyword>
<keyword id="KW-1185">Reference proteome</keyword>
<keyword id="KW-0915">Sodium</keyword>
<keyword id="KW-0739">Sodium transport</keyword>
<keyword id="KW-0769">Symport</keyword>
<keyword id="KW-0812">Transmembrane</keyword>
<keyword id="KW-1133">Transmembrane helix</keyword>
<keyword id="KW-0813">Transport</keyword>
<protein>
    <recommendedName>
        <fullName evidence="1">Cation/acetate symporter ActP</fullName>
    </recommendedName>
    <alternativeName>
        <fullName evidence="1">Acetate permease</fullName>
    </alternativeName>
    <alternativeName>
        <fullName evidence="1">Acetate transporter ActP</fullName>
    </alternativeName>
</protein>
<feature type="chain" id="PRO_1000145711" description="Cation/acetate symporter ActP">
    <location>
        <begin position="1"/>
        <end position="549"/>
    </location>
</feature>
<feature type="transmembrane region" description="Helical" evidence="1">
    <location>
        <begin position="33"/>
        <end position="53"/>
    </location>
</feature>
<feature type="transmembrane region" description="Helical" evidence="1">
    <location>
        <begin position="77"/>
        <end position="97"/>
    </location>
</feature>
<feature type="transmembrane region" description="Helical" evidence="1">
    <location>
        <begin position="103"/>
        <end position="123"/>
    </location>
</feature>
<feature type="transmembrane region" description="Helical" evidence="1">
    <location>
        <begin position="148"/>
        <end position="168"/>
    </location>
</feature>
<feature type="transmembrane region" description="Helical" evidence="1">
    <location>
        <begin position="183"/>
        <end position="203"/>
    </location>
</feature>
<feature type="transmembrane region" description="Helical" evidence="1">
    <location>
        <begin position="206"/>
        <end position="226"/>
    </location>
</feature>
<feature type="transmembrane region" description="Helical" evidence="1">
    <location>
        <begin position="262"/>
        <end position="282"/>
    </location>
</feature>
<feature type="transmembrane region" description="Helical" evidence="1">
    <location>
        <begin position="303"/>
        <end position="323"/>
    </location>
</feature>
<feature type="transmembrane region" description="Helical" evidence="1">
    <location>
        <begin position="355"/>
        <end position="375"/>
    </location>
</feature>
<feature type="transmembrane region" description="Helical" evidence="1">
    <location>
        <begin position="404"/>
        <end position="424"/>
    </location>
</feature>
<feature type="transmembrane region" description="Helical" evidence="1">
    <location>
        <begin position="428"/>
        <end position="448"/>
    </location>
</feature>
<feature type="transmembrane region" description="Helical" evidence="1">
    <location>
        <begin position="464"/>
        <end position="484"/>
    </location>
</feature>
<feature type="transmembrane region" description="Helical" evidence="1">
    <location>
        <begin position="493"/>
        <end position="513"/>
    </location>
</feature>
<evidence type="ECO:0000255" key="1">
    <source>
        <dbReference type="HAMAP-Rule" id="MF_01426"/>
    </source>
</evidence>
<reference key="1">
    <citation type="journal article" date="2009" name="PLoS Genet.">
        <title>Organised genome dynamics in the Escherichia coli species results in highly diverse adaptive paths.</title>
        <authorList>
            <person name="Touchon M."/>
            <person name="Hoede C."/>
            <person name="Tenaillon O."/>
            <person name="Barbe V."/>
            <person name="Baeriswyl S."/>
            <person name="Bidet P."/>
            <person name="Bingen E."/>
            <person name="Bonacorsi S."/>
            <person name="Bouchier C."/>
            <person name="Bouvet O."/>
            <person name="Calteau A."/>
            <person name="Chiapello H."/>
            <person name="Clermont O."/>
            <person name="Cruveiller S."/>
            <person name="Danchin A."/>
            <person name="Diard M."/>
            <person name="Dossat C."/>
            <person name="Karoui M.E."/>
            <person name="Frapy E."/>
            <person name="Garry L."/>
            <person name="Ghigo J.M."/>
            <person name="Gilles A.M."/>
            <person name="Johnson J."/>
            <person name="Le Bouguenec C."/>
            <person name="Lescat M."/>
            <person name="Mangenot S."/>
            <person name="Martinez-Jehanne V."/>
            <person name="Matic I."/>
            <person name="Nassif X."/>
            <person name="Oztas S."/>
            <person name="Petit M.A."/>
            <person name="Pichon C."/>
            <person name="Rouy Z."/>
            <person name="Ruf C.S."/>
            <person name="Schneider D."/>
            <person name="Tourret J."/>
            <person name="Vacherie B."/>
            <person name="Vallenet D."/>
            <person name="Medigue C."/>
            <person name="Rocha E.P.C."/>
            <person name="Denamur E."/>
        </authorList>
    </citation>
    <scope>NUCLEOTIDE SEQUENCE [LARGE SCALE GENOMIC DNA]</scope>
    <source>
        <strain>S88 / ExPEC</strain>
    </source>
</reference>
<sequence length="549" mass="59158">MKRVLTALAATLPFAANAADAISGAVERQPTNWQAIIMFLIFVVFTLGITYWASKRVRSRNDYYTAGGNITGFQNGLAIAGDYMSAASFLGISALVFTSGYDGLIYSLGFLVGWPIILFLIAERLRNLGRYTFADVASYRLKQGPIRILSACGSLVVVALYLIAQMVGAGKLIELLFGLNYHIAVVLVGVLMMMYVLFGGMLATTWVQIIKAVLLLFGASFMAFMVMKHVGFSFNNLFSEAMAVHPKGVDIMKPGGLVKDPISALSLGLGLMFGTAGLPHILMRFFTVSDAREARKSVFYATGFMGYFYILTFIIGFGAIMLVGANPEYKDAAGHLIGGNNMAAVHLANAVGGNLFLGFISAVAFATILAVVAGLTLAGASAVSHDLYANVFKKGATEREELRVSKITVLILGVIAIILGVLFENQNIAFMVGLAFAIAASCNFPIILLSMYWSKLTTRGAMLGGWLGLITAVVLMILGPTIWVQILGHEKAIFPYEYPALFSISVAFLGIWLFSATDNSAEGARERELFRAQFIRSQTGFGVEQGRAH</sequence>
<name>ACTP_ECO45</name>
<proteinExistence type="inferred from homology"/>
<comment type="function">
    <text evidence="1">Transports acetate.</text>
</comment>
<comment type="subcellular location">
    <subcellularLocation>
        <location evidence="1">Cell inner membrane</location>
        <topology evidence="1">Multi-pass membrane protein</topology>
    </subcellularLocation>
</comment>
<comment type="similarity">
    <text evidence="1">Belongs to the sodium:solute symporter (SSF) (TC 2.A.21) family.</text>
</comment>
<accession>B7MJT5</accession>
<organism>
    <name type="scientific">Escherichia coli O45:K1 (strain S88 / ExPEC)</name>
    <dbReference type="NCBI Taxonomy" id="585035"/>
    <lineage>
        <taxon>Bacteria</taxon>
        <taxon>Pseudomonadati</taxon>
        <taxon>Pseudomonadota</taxon>
        <taxon>Gammaproteobacteria</taxon>
        <taxon>Enterobacterales</taxon>
        <taxon>Enterobacteriaceae</taxon>
        <taxon>Escherichia</taxon>
    </lineage>
</organism>
<gene>
    <name evidence="1" type="primary">actP</name>
    <name type="ordered locus">ECS88_4560</name>
</gene>
<dbReference type="EMBL" id="CU928161">
    <property type="protein sequence ID" value="CAR05718.1"/>
    <property type="molecule type" value="Genomic_DNA"/>
</dbReference>
<dbReference type="RefSeq" id="WP_000832549.1">
    <property type="nucleotide sequence ID" value="NC_011742.1"/>
</dbReference>
<dbReference type="SMR" id="B7MJT5"/>
<dbReference type="KEGG" id="ecz:ECS88_4560"/>
<dbReference type="HOGENOM" id="CLU_018808_8_3_6"/>
<dbReference type="Proteomes" id="UP000000747">
    <property type="component" value="Chromosome"/>
</dbReference>
<dbReference type="GO" id="GO:0005886">
    <property type="term" value="C:plasma membrane"/>
    <property type="evidence" value="ECO:0007669"/>
    <property type="project" value="UniProtKB-SubCell"/>
</dbReference>
<dbReference type="GO" id="GO:0015123">
    <property type="term" value="F:acetate transmembrane transporter activity"/>
    <property type="evidence" value="ECO:0007669"/>
    <property type="project" value="UniProtKB-UniRule"/>
</dbReference>
<dbReference type="GO" id="GO:0043879">
    <property type="term" value="F:glycolate transmembrane transporter activity"/>
    <property type="evidence" value="ECO:0007669"/>
    <property type="project" value="InterPro"/>
</dbReference>
<dbReference type="GO" id="GO:0015293">
    <property type="term" value="F:symporter activity"/>
    <property type="evidence" value="ECO:0007669"/>
    <property type="project" value="UniProtKB-KW"/>
</dbReference>
<dbReference type="GO" id="GO:0006847">
    <property type="term" value="P:plasma membrane acetate transport"/>
    <property type="evidence" value="ECO:0007669"/>
    <property type="project" value="TreeGrafter"/>
</dbReference>
<dbReference type="GO" id="GO:0006814">
    <property type="term" value="P:sodium ion transport"/>
    <property type="evidence" value="ECO:0007669"/>
    <property type="project" value="UniProtKB-KW"/>
</dbReference>
<dbReference type="CDD" id="cd11480">
    <property type="entry name" value="SLC5sbd_u4"/>
    <property type="match status" value="1"/>
</dbReference>
<dbReference type="FunFam" id="1.20.1730.10:FF:000001">
    <property type="entry name" value="Cation/acetate symporter ActP"/>
    <property type="match status" value="1"/>
</dbReference>
<dbReference type="Gene3D" id="1.20.1730.10">
    <property type="entry name" value="Sodium/glucose cotransporter"/>
    <property type="match status" value="1"/>
</dbReference>
<dbReference type="HAMAP" id="MF_01426">
    <property type="entry name" value="Acet_symport_ActP"/>
    <property type="match status" value="1"/>
</dbReference>
<dbReference type="InterPro" id="IPR014083">
    <property type="entry name" value="Cation/Ac_symporter_ActP"/>
</dbReference>
<dbReference type="InterPro" id="IPR038377">
    <property type="entry name" value="Na/Glc_symporter_sf"/>
</dbReference>
<dbReference type="InterPro" id="IPR001734">
    <property type="entry name" value="Na/solute_symporter"/>
</dbReference>
<dbReference type="InterPro" id="IPR018212">
    <property type="entry name" value="Na/solute_symporter_CS"/>
</dbReference>
<dbReference type="InterPro" id="IPR050277">
    <property type="entry name" value="Sodium:Solute_Symporter"/>
</dbReference>
<dbReference type="NCBIfam" id="NF006903">
    <property type="entry name" value="PRK09395.1"/>
    <property type="match status" value="1"/>
</dbReference>
<dbReference type="NCBIfam" id="NF009135">
    <property type="entry name" value="PRK12488.1"/>
    <property type="match status" value="1"/>
</dbReference>
<dbReference type="NCBIfam" id="TIGR00813">
    <property type="entry name" value="sss"/>
    <property type="match status" value="1"/>
</dbReference>
<dbReference type="NCBIfam" id="TIGR02711">
    <property type="entry name" value="symport_actP"/>
    <property type="match status" value="1"/>
</dbReference>
<dbReference type="PANTHER" id="PTHR48086:SF6">
    <property type="entry name" value="CATION_ACETATE SYMPORTER ACTP"/>
    <property type="match status" value="1"/>
</dbReference>
<dbReference type="PANTHER" id="PTHR48086">
    <property type="entry name" value="SODIUM/PROLINE SYMPORTER-RELATED"/>
    <property type="match status" value="1"/>
</dbReference>
<dbReference type="Pfam" id="PF00474">
    <property type="entry name" value="SSF"/>
    <property type="match status" value="1"/>
</dbReference>
<dbReference type="PROSITE" id="PS00456">
    <property type="entry name" value="NA_SOLUT_SYMP_1"/>
    <property type="match status" value="1"/>
</dbReference>
<dbReference type="PROSITE" id="PS00457">
    <property type="entry name" value="NA_SOLUT_SYMP_2"/>
    <property type="match status" value="1"/>
</dbReference>
<dbReference type="PROSITE" id="PS50283">
    <property type="entry name" value="NA_SOLUT_SYMP_3"/>
    <property type="match status" value="1"/>
</dbReference>